<gene>
    <name evidence="1" type="primary">obg</name>
    <name type="ordered locus">Ecaj_0490</name>
</gene>
<comment type="function">
    <text evidence="1">An essential GTPase which binds GTP, GDP and possibly (p)ppGpp with moderate affinity, with high nucleotide exchange rates and a fairly low GTP hydrolysis rate. Plays a role in control of the cell cycle, stress response, ribosome biogenesis and in those bacteria that undergo differentiation, in morphogenesis control.</text>
</comment>
<comment type="cofactor">
    <cofactor evidence="1">
        <name>Mg(2+)</name>
        <dbReference type="ChEBI" id="CHEBI:18420"/>
    </cofactor>
</comment>
<comment type="subunit">
    <text evidence="1">Monomer.</text>
</comment>
<comment type="subcellular location">
    <subcellularLocation>
        <location evidence="1">Cytoplasm</location>
    </subcellularLocation>
</comment>
<comment type="similarity">
    <text evidence="1">Belongs to the TRAFAC class OBG-HflX-like GTPase superfamily. OBG GTPase family.</text>
</comment>
<protein>
    <recommendedName>
        <fullName evidence="1">GTPase Obg</fullName>
        <ecNumber evidence="1">3.6.5.-</ecNumber>
    </recommendedName>
    <alternativeName>
        <fullName evidence="1">GTP-binding protein Obg</fullName>
    </alternativeName>
</protein>
<proteinExistence type="inferred from homology"/>
<evidence type="ECO:0000255" key="1">
    <source>
        <dbReference type="HAMAP-Rule" id="MF_01454"/>
    </source>
</evidence>
<evidence type="ECO:0000255" key="2">
    <source>
        <dbReference type="PROSITE-ProRule" id="PRU01231"/>
    </source>
</evidence>
<accession>Q3YRX8</accession>
<name>OBG_EHRCJ</name>
<sequence length="340" mass="37810">MSFIDEAKIYLKAGNGGDGCSSFRREKFIEFGGPDGGNGGNGGNIIFYTSHHINTLLYFRYKQHIKAENGNPGSSKKKSGSSGKDVIIKVPIGTQLYDEDGMLITDLNEENQKFIAAHGGKGGIGNANYKTSTNRAPRHFTFGKRGEEKHIILKLKIISDVGIIGLPNAGKSSFLASCTNSKTKIADYPFTTLEPHLGVAFIDNTELVLADIPGLIPGAHLGHGIGDKFLKHIERCSILLHIIDCTLDNIIESYECIRKELSFYNKELSNKTEFIVLNKSDLLDKKEINQKKQILSNHTKKEIFISSIKNNRYPILSTLIKQIHKKYTNTKPHIYDPFNI</sequence>
<dbReference type="EC" id="3.6.5.-" evidence="1"/>
<dbReference type="EMBL" id="CP000107">
    <property type="protein sequence ID" value="AAZ68527.1"/>
    <property type="molecule type" value="Genomic_DNA"/>
</dbReference>
<dbReference type="RefSeq" id="WP_011304605.1">
    <property type="nucleotide sequence ID" value="NC_007354.1"/>
</dbReference>
<dbReference type="SMR" id="Q3YRX8"/>
<dbReference type="FunCoup" id="Q3YRX8">
    <property type="interactions" value="313"/>
</dbReference>
<dbReference type="STRING" id="269484.Ecaj_0490"/>
<dbReference type="KEGG" id="ecn:Ecaj_0490"/>
<dbReference type="eggNOG" id="COG0536">
    <property type="taxonomic scope" value="Bacteria"/>
</dbReference>
<dbReference type="HOGENOM" id="CLU_011747_2_0_5"/>
<dbReference type="InParanoid" id="Q3YRX8"/>
<dbReference type="Proteomes" id="UP000000435">
    <property type="component" value="Chromosome"/>
</dbReference>
<dbReference type="GO" id="GO:0005737">
    <property type="term" value="C:cytoplasm"/>
    <property type="evidence" value="ECO:0007669"/>
    <property type="project" value="UniProtKB-SubCell"/>
</dbReference>
<dbReference type="GO" id="GO:0005525">
    <property type="term" value="F:GTP binding"/>
    <property type="evidence" value="ECO:0007669"/>
    <property type="project" value="UniProtKB-UniRule"/>
</dbReference>
<dbReference type="GO" id="GO:0003924">
    <property type="term" value="F:GTPase activity"/>
    <property type="evidence" value="ECO:0007669"/>
    <property type="project" value="UniProtKB-UniRule"/>
</dbReference>
<dbReference type="GO" id="GO:0000287">
    <property type="term" value="F:magnesium ion binding"/>
    <property type="evidence" value="ECO:0007669"/>
    <property type="project" value="InterPro"/>
</dbReference>
<dbReference type="GO" id="GO:0042254">
    <property type="term" value="P:ribosome biogenesis"/>
    <property type="evidence" value="ECO:0007669"/>
    <property type="project" value="UniProtKB-UniRule"/>
</dbReference>
<dbReference type="CDD" id="cd01898">
    <property type="entry name" value="Obg"/>
    <property type="match status" value="1"/>
</dbReference>
<dbReference type="FunFam" id="2.70.210.12:FF:000001">
    <property type="entry name" value="GTPase Obg"/>
    <property type="match status" value="1"/>
</dbReference>
<dbReference type="Gene3D" id="2.70.210.12">
    <property type="entry name" value="GTP1/OBG domain"/>
    <property type="match status" value="1"/>
</dbReference>
<dbReference type="Gene3D" id="3.40.50.300">
    <property type="entry name" value="P-loop containing nucleotide triphosphate hydrolases"/>
    <property type="match status" value="1"/>
</dbReference>
<dbReference type="HAMAP" id="MF_01454">
    <property type="entry name" value="GTPase_Obg"/>
    <property type="match status" value="1"/>
</dbReference>
<dbReference type="InterPro" id="IPR031167">
    <property type="entry name" value="G_OBG"/>
</dbReference>
<dbReference type="InterPro" id="IPR006073">
    <property type="entry name" value="GTP-bd"/>
</dbReference>
<dbReference type="InterPro" id="IPR014100">
    <property type="entry name" value="GTP-bd_Obg/CgtA"/>
</dbReference>
<dbReference type="InterPro" id="IPR006074">
    <property type="entry name" value="GTP1-OBG_CS"/>
</dbReference>
<dbReference type="InterPro" id="IPR006169">
    <property type="entry name" value="GTP1_OBG_dom"/>
</dbReference>
<dbReference type="InterPro" id="IPR036726">
    <property type="entry name" value="GTP1_OBG_dom_sf"/>
</dbReference>
<dbReference type="InterPro" id="IPR045086">
    <property type="entry name" value="OBG_GTPase"/>
</dbReference>
<dbReference type="InterPro" id="IPR027417">
    <property type="entry name" value="P-loop_NTPase"/>
</dbReference>
<dbReference type="NCBIfam" id="TIGR02729">
    <property type="entry name" value="Obg_CgtA"/>
    <property type="match status" value="1"/>
</dbReference>
<dbReference type="NCBIfam" id="NF008955">
    <property type="entry name" value="PRK12297.1"/>
    <property type="match status" value="1"/>
</dbReference>
<dbReference type="NCBIfam" id="NF008956">
    <property type="entry name" value="PRK12299.1"/>
    <property type="match status" value="1"/>
</dbReference>
<dbReference type="PANTHER" id="PTHR11702">
    <property type="entry name" value="DEVELOPMENTALLY REGULATED GTP-BINDING PROTEIN-RELATED"/>
    <property type="match status" value="1"/>
</dbReference>
<dbReference type="PANTHER" id="PTHR11702:SF31">
    <property type="entry name" value="MITOCHONDRIAL RIBOSOME-ASSOCIATED GTPASE 2"/>
    <property type="match status" value="1"/>
</dbReference>
<dbReference type="Pfam" id="PF01018">
    <property type="entry name" value="GTP1_OBG"/>
    <property type="match status" value="1"/>
</dbReference>
<dbReference type="Pfam" id="PF01926">
    <property type="entry name" value="MMR_HSR1"/>
    <property type="match status" value="1"/>
</dbReference>
<dbReference type="PIRSF" id="PIRSF002401">
    <property type="entry name" value="GTP_bd_Obg/CgtA"/>
    <property type="match status" value="1"/>
</dbReference>
<dbReference type="PRINTS" id="PR00326">
    <property type="entry name" value="GTP1OBG"/>
</dbReference>
<dbReference type="SUPFAM" id="SSF82051">
    <property type="entry name" value="Obg GTP-binding protein N-terminal domain"/>
    <property type="match status" value="1"/>
</dbReference>
<dbReference type="SUPFAM" id="SSF52540">
    <property type="entry name" value="P-loop containing nucleoside triphosphate hydrolases"/>
    <property type="match status" value="1"/>
</dbReference>
<dbReference type="PROSITE" id="PS51710">
    <property type="entry name" value="G_OBG"/>
    <property type="match status" value="1"/>
</dbReference>
<dbReference type="PROSITE" id="PS00905">
    <property type="entry name" value="GTP1_OBG"/>
    <property type="match status" value="1"/>
</dbReference>
<dbReference type="PROSITE" id="PS51883">
    <property type="entry name" value="OBG"/>
    <property type="match status" value="1"/>
</dbReference>
<organism>
    <name type="scientific">Ehrlichia canis (strain Jake)</name>
    <dbReference type="NCBI Taxonomy" id="269484"/>
    <lineage>
        <taxon>Bacteria</taxon>
        <taxon>Pseudomonadati</taxon>
        <taxon>Pseudomonadota</taxon>
        <taxon>Alphaproteobacteria</taxon>
        <taxon>Rickettsiales</taxon>
        <taxon>Anaplasmataceae</taxon>
        <taxon>Ehrlichia</taxon>
    </lineage>
</organism>
<reference key="1">
    <citation type="journal article" date="2006" name="J. Bacteriol.">
        <title>The genome of the obligately intracellular bacterium Ehrlichia canis reveals themes of complex membrane structure and immune evasion strategies.</title>
        <authorList>
            <person name="Mavromatis K."/>
            <person name="Doyle C.K."/>
            <person name="Lykidis A."/>
            <person name="Ivanova N."/>
            <person name="Francino M.P."/>
            <person name="Chain P."/>
            <person name="Shin M."/>
            <person name="Malfatti S."/>
            <person name="Larimer F."/>
            <person name="Copeland A."/>
            <person name="Detter J.C."/>
            <person name="Land M."/>
            <person name="Richardson P.M."/>
            <person name="Yu X.J."/>
            <person name="Walker D.H."/>
            <person name="McBride J.W."/>
            <person name="Kyrpides N.C."/>
        </authorList>
    </citation>
    <scope>NUCLEOTIDE SEQUENCE [LARGE SCALE GENOMIC DNA]</scope>
    <source>
        <strain>Jake</strain>
    </source>
</reference>
<feature type="chain" id="PRO_0000385899" description="GTPase Obg">
    <location>
        <begin position="1"/>
        <end position="340"/>
    </location>
</feature>
<feature type="domain" description="Obg" evidence="2">
    <location>
        <begin position="1"/>
        <end position="158"/>
    </location>
</feature>
<feature type="domain" description="OBG-type G" evidence="1">
    <location>
        <begin position="159"/>
        <end position="325"/>
    </location>
</feature>
<feature type="binding site" evidence="1">
    <location>
        <begin position="165"/>
        <end position="172"/>
    </location>
    <ligand>
        <name>GTP</name>
        <dbReference type="ChEBI" id="CHEBI:37565"/>
    </ligand>
</feature>
<feature type="binding site" evidence="1">
    <location>
        <position position="172"/>
    </location>
    <ligand>
        <name>Mg(2+)</name>
        <dbReference type="ChEBI" id="CHEBI:18420"/>
    </ligand>
</feature>
<feature type="binding site" evidence="1">
    <location>
        <begin position="190"/>
        <end position="194"/>
    </location>
    <ligand>
        <name>GTP</name>
        <dbReference type="ChEBI" id="CHEBI:37565"/>
    </ligand>
</feature>
<feature type="binding site" evidence="1">
    <location>
        <position position="192"/>
    </location>
    <ligand>
        <name>Mg(2+)</name>
        <dbReference type="ChEBI" id="CHEBI:18420"/>
    </ligand>
</feature>
<feature type="binding site" evidence="1">
    <location>
        <begin position="211"/>
        <end position="214"/>
    </location>
    <ligand>
        <name>GTP</name>
        <dbReference type="ChEBI" id="CHEBI:37565"/>
    </ligand>
</feature>
<feature type="binding site" evidence="1">
    <location>
        <begin position="278"/>
        <end position="281"/>
    </location>
    <ligand>
        <name>GTP</name>
        <dbReference type="ChEBI" id="CHEBI:37565"/>
    </ligand>
</feature>
<feature type="binding site" evidence="1">
    <location>
        <begin position="306"/>
        <end position="308"/>
    </location>
    <ligand>
        <name>GTP</name>
        <dbReference type="ChEBI" id="CHEBI:37565"/>
    </ligand>
</feature>
<keyword id="KW-0963">Cytoplasm</keyword>
<keyword id="KW-0342">GTP-binding</keyword>
<keyword id="KW-0378">Hydrolase</keyword>
<keyword id="KW-0460">Magnesium</keyword>
<keyword id="KW-0479">Metal-binding</keyword>
<keyword id="KW-0547">Nucleotide-binding</keyword>